<comment type="function">
    <text evidence="5">Putative adhesion molecule that mediates sialic-acid dependent binding to cells. Preferentially binds to alpha-2,3- and alpha-2,6-linked sialic acid. Also binds disialogangliosides (disialogalactosyl globoside, disialyl lactotetraosylceramide and disialyl GalNAc lactotetraoslylceramide). The sialic acid recognition site may be masked by cis interactions with sialic acids on the same cell surface. In the immune response, may act as an inhibitory receptor upon ligand induced tyrosine phosphorylation by recruiting cytoplasmic phosphatase(s) via their SH2 domain(s) that block signal transduction through dephosphorylation of signaling molecules. Mediates inhibition of natural killer cells cytotoxicity. May play a role in hemopoiesis. Inhibits differentiation of CD34+ cell precursors towards myelomonocytic cell lineage and proliferation of leukemic myeloid cells (in vitro).</text>
</comment>
<comment type="subunit">
    <text evidence="4 8 9">Interacts with PTPN6/SHP-1 upon phosphorylation.</text>
</comment>
<comment type="interaction">
    <interactant intactId="EBI-2801178">
        <id>Q9Y286</id>
    </interactant>
    <interactant intactId="EBI-12188413">
        <id>B2RUZ4</id>
        <label>SMIM1</label>
    </interactant>
    <organismsDiffer>false</organismsDiffer>
    <experiments>3</experiments>
</comment>
<comment type="subcellular location">
    <subcellularLocation>
        <location>Membrane</location>
        <topology>Single-pass type I membrane protein</topology>
    </subcellularLocation>
</comment>
<comment type="alternative products">
    <event type="alternative splicing"/>
    <isoform>
        <id>Q9Y286-1</id>
        <name>1</name>
        <name>AIRM-1b</name>
        <sequence type="displayed"/>
    </isoform>
    <isoform>
        <id>Q9Y286-2</id>
        <name>2</name>
        <name>AIRM-2</name>
        <sequence type="described" ref="VSP_002555"/>
    </isoform>
    <isoform>
        <id>Q9Y286-3</id>
        <name>3</name>
        <name>AIRM-3</name>
        <sequence type="described" ref="VSP_002556 VSP_002558"/>
    </isoform>
    <isoform>
        <id>Q9Y286-4</id>
        <name>4</name>
        <sequence type="described" ref="VSP_002557 VSP_002558"/>
    </isoform>
</comment>
<comment type="tissue specificity">
    <text>Predominantly expressed by resting and activated natural killer cells and at lower levels by granulocytes and monocytes. High expression found in placenta, liver, lung, spleen, and peripheral blood leukocytes.</text>
</comment>
<comment type="domain">
    <text>Contains 1 copy of a cytoplasmic motif that is referred to as the immunoreceptor tyrosine-based inhibitor motif (ITIM). This motif is involved in modulation of cellular responses. The phosphorylated ITIM motif can bind the SH2 domain of several SH2-containing phosphatases.</text>
</comment>
<comment type="PTM">
    <text evidence="4">Tyrosine phosphorylated.</text>
</comment>
<comment type="miscellaneous">
    <molecule>Isoform 3</molecule>
    <text evidence="14">May be produced at very low levels due to a premature stop codon in the mRNA, leading to nonsense-mediated mRNA decay.</text>
</comment>
<comment type="similarity">
    <text evidence="14">Belongs to the immunoglobulin superfamily. SIGLEC (sialic acid binding Ig-like lectin) family.</text>
</comment>
<comment type="sequence caution" evidence="14">
    <conflict type="frameshift">
        <sequence resource="EMBL-CDS" id="AAF44346"/>
    </conflict>
</comment>
<comment type="online information" name="Functional Glycomics Gateway - Glycan Binding">
    <link uri="http://www.functionalglycomics.org/glycomics/GBPServlet?&amp;operationType=view&amp;cbpId=cbp_hum_Itlect_274"/>
    <text>Siglec-7</text>
</comment>
<name>SIGL7_HUMAN</name>
<sequence length="467" mass="51143">MLLLLLLPLLWGRERVEGQKSNRKDYSLTMQSSVTVQEGMCVHVRCSFSYPVDSQTDSDPVHGYWFRAGNDISWKAPVATNNPAWAVQEETRDRFHLLGDPQTKNCTLSIRDARMSDAGRYFFRMEKGNIKWNYKYDQLSVNVTALTHRPNILIPGTLESGCFQNLTCSVPWACEQGTPPMISWMGTSVSPLHPSTTRSSVLTLIPQPQHHGTSLTCQVTLPGAGVTTNRTIQLNVSYPPQNLTVTVFQGEGTASTALGNSSSLSVLEGQSLRLVCAVDSNPPARLSWTWRSLTLYPSQPSNPLVLELQVHLGDEGEFTCRAQNSLGSQHVSLNLSLQQEYTGKMRPVSGVLLGAVGGAGATALVFLSFCVIFIVVRSCRKKSARPAADVGDIGMKDANTIRGSASQGNLTESWADDNPRHHGLAAHSSGEEREIQYAPLSFHKGEPQDLSGQEATNNEYSEIKIPK</sequence>
<evidence type="ECO:0000255" key="1"/>
<evidence type="ECO:0000255" key="2">
    <source>
        <dbReference type="PROSITE-ProRule" id="PRU00114"/>
    </source>
</evidence>
<evidence type="ECO:0000256" key="3">
    <source>
        <dbReference type="SAM" id="MobiDB-lite"/>
    </source>
</evidence>
<evidence type="ECO:0000269" key="4">
    <source>
    </source>
</evidence>
<evidence type="ECO:0000269" key="5">
    <source>
    </source>
</evidence>
<evidence type="ECO:0000269" key="6">
    <source>
    </source>
</evidence>
<evidence type="ECO:0000269" key="7">
    <source>
    </source>
</evidence>
<evidence type="ECO:0000269" key="8">
    <source>
    </source>
</evidence>
<evidence type="ECO:0000269" key="9">
    <source>
    </source>
</evidence>
<evidence type="ECO:0000269" key="10">
    <source>
    </source>
</evidence>
<evidence type="ECO:0000303" key="11">
    <source>
    </source>
</evidence>
<evidence type="ECO:0000303" key="12">
    <source>
    </source>
</evidence>
<evidence type="ECO:0000303" key="13">
    <source ref="3"/>
</evidence>
<evidence type="ECO:0000305" key="14"/>
<evidence type="ECO:0007744" key="15">
    <source>
    </source>
</evidence>
<evidence type="ECO:0007829" key="16">
    <source>
        <dbReference type="PDB" id="1NKO"/>
    </source>
</evidence>
<evidence type="ECO:0007829" key="17">
    <source>
        <dbReference type="PDB" id="1O7V"/>
    </source>
</evidence>
<evidence type="ECO:0007829" key="18">
    <source>
        <dbReference type="PDB" id="2HRL"/>
    </source>
</evidence>
<proteinExistence type="evidence at protein level"/>
<reference key="1">
    <citation type="journal article" date="1999" name="J. Biol. Chem.">
        <title>Identification and characterization of a novel siglec, siglec-7, expressed by human natural killer cells and monocytes.</title>
        <authorList>
            <person name="Nicoll G."/>
            <person name="Ni J."/>
            <person name="Liu D."/>
            <person name="Klenerman P."/>
            <person name="Munday J."/>
            <person name="Dubock S."/>
            <person name="Mattei M.-G."/>
            <person name="Crocker P.R."/>
        </authorList>
    </citation>
    <scope>NUCLEOTIDE SEQUENCE [MRNA] (ISOFORM 1)</scope>
    <source>
        <tissue>Dendritic cell</tissue>
    </source>
</reference>
<reference key="2">
    <citation type="journal article" date="1999" name="J. Exp. Med.">
        <title>Identification and molecular cloning of p75/AIRM1, a novel member of the sialoadhesin family that functions as an inhibitory receptor in human natural killer cells.</title>
        <authorList>
            <person name="Falco M."/>
            <person name="Biassoni R."/>
            <person name="Bottino C."/>
            <person name="Vitale M."/>
            <person name="Sivori S."/>
            <person name="Augugliaro R."/>
            <person name="Moretta L."/>
            <person name="Moretta A."/>
        </authorList>
    </citation>
    <scope>NUCLEOTIDE SEQUENCE [MRNA] (ISOFORMS 1; 2; 3 AND 4)</scope>
    <scope>PHOSPHORYLATION</scope>
    <scope>INTERACTION WITH PTPN6</scope>
    <source>
        <tissue>Lymphoid tissue</tissue>
    </source>
</reference>
<reference key="3">
    <citation type="submission" date="1999-08" db="EMBL/GenBank/DDBJ databases">
        <title>Characterization of a novel siglec from dendritic cells.</title>
        <authorList>
            <person name="Zhang W."/>
            <person name="Wan T."/>
            <person name="Cao X."/>
        </authorList>
    </citation>
    <scope>NUCLEOTIDE SEQUENCE [MRNA] (ISOFORM 2)</scope>
    <source>
        <tissue>Dendritic cell</tissue>
    </source>
</reference>
<reference key="4">
    <citation type="journal article" date="2000" name="Glycobiology">
        <title>Siglec-7: a sialic acid-binding lectin of the immunoglobulin superfamily.</title>
        <authorList>
            <person name="Angata T."/>
            <person name="Varki A."/>
        </authorList>
    </citation>
    <scope>NUCLEOTIDE SEQUENCE [MRNA] (ISOFORM 2)</scope>
</reference>
<reference key="5">
    <citation type="journal article" date="1999" name="Proc. Natl. Acad. Sci. U.S.A.">
        <title>Engagement of p75/AIRM1 or CD33 inhibits the proliferation of normal or leukemic myeloid cells.</title>
        <authorList>
            <person name="Vitale C."/>
            <person name="Romagnani C."/>
            <person name="Falco M."/>
            <person name="Ponte M."/>
            <person name="Vitale M."/>
            <person name="Moretta A."/>
            <person name="Bacigalupo A."/>
            <person name="Moretta L."/>
            <person name="Mingari M.C."/>
        </authorList>
    </citation>
    <scope>FUNCTION</scope>
</reference>
<reference key="6">
    <citation type="journal article" date="2001" name="FEBS Lett.">
        <title>Binding specificity of siglec7 to disialogangliosides of renal cell carcinoma: possible role of disialogangliosides in tumor progression.</title>
        <authorList>
            <person name="Ito A."/>
            <person name="Handa K."/>
            <person name="Withers D.A."/>
            <person name="Satoh M."/>
            <person name="Hakomori S."/>
        </authorList>
    </citation>
    <scope>DISIALOGANGLIOSIDE-BINDING</scope>
</reference>
<reference key="7">
    <citation type="journal article" date="2014" name="J. Proteomics">
        <title>An enzyme assisted RP-RPLC approach for in-depth analysis of human liver phosphoproteome.</title>
        <authorList>
            <person name="Bian Y."/>
            <person name="Song C."/>
            <person name="Cheng K."/>
            <person name="Dong M."/>
            <person name="Wang F."/>
            <person name="Huang J."/>
            <person name="Sun D."/>
            <person name="Wang L."/>
            <person name="Ye M."/>
            <person name="Zou H."/>
        </authorList>
    </citation>
    <scope>PHOSPHORYLATION [LARGE SCALE ANALYSIS] AT SER-429</scope>
    <scope>IDENTIFICATION BY MASS SPECTROMETRY [LARGE SCALE ANALYSIS]</scope>
    <source>
        <tissue>Liver</tissue>
    </source>
</reference>
<reference key="8">
    <citation type="journal article" date="2003" name="J. Biol. Chem.">
        <title>High resolution crystal structures of Siglec-7. Insights into ligand specificity in the Siglec family.</title>
        <authorList>
            <person name="Alphey M.S."/>
            <person name="Attrill H."/>
            <person name="Crocker P.R."/>
            <person name="van Aalten D.M."/>
        </authorList>
    </citation>
    <scope>X-RAY CRYSTALLOGRAPHY (1.75 ANGSTROMS) OF 18-144</scope>
    <scope>DISULFIDE BOND</scope>
    <scope>GLYCOSYLATION AT ASN-105</scope>
</reference>
<reference key="9">
    <citation type="journal article" date="2004" name="Acta Crystallogr. D">
        <title>Structure of the saccharide-binding domain of the human natural killer cell inhibitory receptor p75/AIRM1.</title>
        <authorList>
            <person name="Dimasi N."/>
            <person name="Moretta A."/>
            <person name="Moretta L."/>
            <person name="Biassoni R."/>
            <person name="Mariuzza R.A."/>
        </authorList>
    </citation>
    <scope>X-RAY CRYSTALLOGRAPHY (1.45 ANGSTROMS) OF 19-150</scope>
    <scope>DISULFIDE BOND</scope>
</reference>
<reference key="10">
    <citation type="journal article" date="2006" name="Biochem. J.">
        <title>The structure of siglec-7 in complex with sialosides: leads for rational structure-based inhibitor design.</title>
        <authorList>
            <person name="Attrill H."/>
            <person name="Takazawa H."/>
            <person name="Witt S."/>
            <person name="Kelm S."/>
            <person name="Isecke R."/>
            <person name="Brossmer R."/>
            <person name="Ando T."/>
            <person name="Ishida H."/>
            <person name="Kiso M."/>
            <person name="Crocker P.R."/>
            <person name="van Aalten D.M."/>
        </authorList>
    </citation>
    <scope>X-RAY CRYSTALLOGRAPHY (1.6 ANGSTROMS) OF 18-144 IN COMPLEX WITH SIALYLATED LIGAND</scope>
    <scope>GLYCOSYLATION AT ASN-105</scope>
    <scope>DISULFIDE BOND</scope>
</reference>
<reference key="11">
    <citation type="journal article" date="2006" name="J. Biol. Chem.">
        <title>Siglec-7 undergoes a major conformational change when complexed with the alpha(2,8)-disialylganglioside GT1b.</title>
        <authorList>
            <person name="Attrill H."/>
            <person name="Imamura A."/>
            <person name="Sharma R.S."/>
            <person name="Kiso M."/>
            <person name="Crocker P.R."/>
            <person name="van Aalten D.M."/>
        </authorList>
    </citation>
    <scope>X-RAY CRYSTALLOGRAPHY (1.85 ANGSTROMS) OF 18-144 IN COMPLEX WITH ALPHA(2,8)-DISIALYLATED LIGAND GT1B</scope>
    <scope>GLYCOSYLATION AT ASN-105</scope>
    <scope>DISULFIDE BOND</scope>
</reference>
<reference key="12">
    <citation type="journal article" date="2006" name="Science">
        <title>The consensus coding sequences of human breast and colorectal cancers.</title>
        <authorList>
            <person name="Sjoeblom T."/>
            <person name="Jones S."/>
            <person name="Wood L.D."/>
            <person name="Parsons D.W."/>
            <person name="Lin J."/>
            <person name="Barber T.D."/>
            <person name="Mandelker D."/>
            <person name="Leary R.J."/>
            <person name="Ptak J."/>
            <person name="Silliman N."/>
            <person name="Szabo S."/>
            <person name="Buckhaults P."/>
            <person name="Farrell C."/>
            <person name="Meeh P."/>
            <person name="Markowitz S.D."/>
            <person name="Willis J."/>
            <person name="Dawson D."/>
            <person name="Willson J.K.V."/>
            <person name="Gazdar A.F."/>
            <person name="Hartigan J."/>
            <person name="Wu L."/>
            <person name="Liu C."/>
            <person name="Parmigiani G."/>
            <person name="Park B.H."/>
            <person name="Bachman K.E."/>
            <person name="Papadopoulos N."/>
            <person name="Vogelstein B."/>
            <person name="Kinzler K.W."/>
            <person name="Velculescu V.E."/>
        </authorList>
    </citation>
    <scope>VARIANT [LARGE SCALE ANALYSIS] PRO-215</scope>
</reference>
<keyword id="KW-0002">3D-structure</keyword>
<keyword id="KW-0025">Alternative splicing</keyword>
<keyword id="KW-0130">Cell adhesion</keyword>
<keyword id="KW-1015">Disulfide bond</keyword>
<keyword id="KW-0325">Glycoprotein</keyword>
<keyword id="KW-0393">Immunoglobulin domain</keyword>
<keyword id="KW-0430">Lectin</keyword>
<keyword id="KW-0472">Membrane</keyword>
<keyword id="KW-0597">Phosphoprotein</keyword>
<keyword id="KW-1267">Proteomics identification</keyword>
<keyword id="KW-1185">Reference proteome</keyword>
<keyword id="KW-0677">Repeat</keyword>
<keyword id="KW-0732">Signal</keyword>
<keyword id="KW-0812">Transmembrane</keyword>
<keyword id="KW-1133">Transmembrane helix</keyword>
<feature type="signal peptide" evidence="1">
    <location>
        <begin position="1"/>
        <end position="18"/>
    </location>
</feature>
<feature type="chain" id="PRO_0000014947" description="Sialic acid-binding Ig-like lectin 7">
    <location>
        <begin position="19"/>
        <end position="467"/>
    </location>
</feature>
<feature type="topological domain" description="Extracellular" evidence="1">
    <location>
        <begin position="19"/>
        <end position="353"/>
    </location>
</feature>
<feature type="transmembrane region" description="Helical" evidence="1">
    <location>
        <begin position="354"/>
        <end position="376"/>
    </location>
</feature>
<feature type="topological domain" description="Cytoplasmic" evidence="1">
    <location>
        <begin position="377"/>
        <end position="467"/>
    </location>
</feature>
<feature type="domain" description="Ig-like V-type">
    <location>
        <begin position="39"/>
        <end position="122"/>
    </location>
</feature>
<feature type="domain" description="Ig-like C2-type 1">
    <location>
        <begin position="150"/>
        <end position="233"/>
    </location>
</feature>
<feature type="domain" description="Ig-like C2-type 2">
    <location>
        <begin position="240"/>
        <end position="336"/>
    </location>
</feature>
<feature type="region of interest" description="Disordered" evidence="3">
    <location>
        <begin position="401"/>
        <end position="431"/>
    </location>
</feature>
<feature type="region of interest" description="Disordered" evidence="3">
    <location>
        <begin position="443"/>
        <end position="467"/>
    </location>
</feature>
<feature type="short sequence motif" description="ITIM motif">
    <location>
        <begin position="435"/>
        <end position="440"/>
    </location>
</feature>
<feature type="compositionally biased region" description="Polar residues" evidence="3">
    <location>
        <begin position="401"/>
        <end position="412"/>
    </location>
</feature>
<feature type="compositionally biased region" description="Polar residues" evidence="3">
    <location>
        <begin position="450"/>
        <end position="460"/>
    </location>
</feature>
<feature type="binding site" evidence="8 9">
    <location>
        <position position="124"/>
    </location>
    <ligand>
        <name>N-acetylneuraminate</name>
        <dbReference type="ChEBI" id="CHEBI:35418"/>
    </ligand>
</feature>
<feature type="binding site" evidence="6 8 9">
    <location>
        <begin position="131"/>
        <end position="135"/>
    </location>
    <ligand>
        <name>N-acetylneuraminate</name>
        <dbReference type="ChEBI" id="CHEBI:35418"/>
    </ligand>
</feature>
<feature type="modified residue" description="Phosphoserine" evidence="15">
    <location>
        <position position="429"/>
    </location>
</feature>
<feature type="glycosylation site" description="N-linked (GlcNAc...) asparagine" evidence="8 9">
    <location>
        <position position="105"/>
    </location>
</feature>
<feature type="glycosylation site" description="N-linked (GlcNAc...) asparagine" evidence="1">
    <location>
        <position position="142"/>
    </location>
</feature>
<feature type="glycosylation site" description="N-linked (GlcNAc...) asparagine" evidence="1">
    <location>
        <position position="165"/>
    </location>
</feature>
<feature type="glycosylation site" description="N-linked (GlcNAc...) asparagine" evidence="1">
    <location>
        <position position="229"/>
    </location>
</feature>
<feature type="glycosylation site" description="N-linked (GlcNAc...) asparagine" evidence="1">
    <location>
        <position position="235"/>
    </location>
</feature>
<feature type="glycosylation site" description="N-linked (GlcNAc...) asparagine" evidence="1">
    <location>
        <position position="242"/>
    </location>
</feature>
<feature type="glycosylation site" description="N-linked (GlcNAc...) asparagine" evidence="1">
    <location>
        <position position="260"/>
    </location>
</feature>
<feature type="glycosylation site" description="N-linked (GlcNAc...) asparagine" evidence="1">
    <location>
        <position position="334"/>
    </location>
</feature>
<feature type="disulfide bond" evidence="2 6 7 8 9">
    <location>
        <begin position="46"/>
        <end position="106"/>
    </location>
</feature>
<feature type="disulfide bond" evidence="2">
    <location>
        <begin position="168"/>
        <end position="217"/>
    </location>
</feature>
<feature type="disulfide bond" evidence="2">
    <location>
        <begin position="276"/>
        <end position="320"/>
    </location>
</feature>
<feature type="splice variant" id="VSP_002555" description="In isoform 2." evidence="11 12 13">
    <original>ALTHRPNILIPGTLESGCFQNLTCSVPWACEQGTPPMISWMGTSVSPLHPSTTRSSVLTLIPQPQHHGTSLTCQVTLPGAGVTTNRTIQLNVSY</original>
    <variation>D</variation>
    <location>
        <begin position="145"/>
        <end position="238"/>
    </location>
</feature>
<feature type="splice variant" id="VSP_002556" description="In isoform 3." evidence="11">
    <original>A</original>
    <variation>E</variation>
    <location>
        <position position="145"/>
    </location>
</feature>
<feature type="splice variant" id="VSP_002557" description="In isoform 4." evidence="11">
    <original>A</original>
    <variation>G</variation>
    <location>
        <position position="145"/>
    </location>
</feature>
<feature type="splice variant" id="VSP_002558" description="In isoform 3 and isoform 4." evidence="11">
    <location>
        <begin position="146"/>
        <end position="467"/>
    </location>
</feature>
<feature type="sequence variant" id="VAR_035523" description="In a colorectal cancer sample; somatic mutation." evidence="10">
    <original>L</original>
    <variation>P</variation>
    <location>
        <position position="215"/>
    </location>
</feature>
<feature type="sequence conflict" description="In Ref. 4; AAF44346." evidence="14" ref="4">
    <original>V</original>
    <variation>A</variation>
    <location>
        <position position="42"/>
    </location>
</feature>
<feature type="helix" evidence="16">
    <location>
        <begin position="23"/>
        <end position="25"/>
    </location>
</feature>
<feature type="strand" evidence="16">
    <location>
        <begin position="27"/>
        <end position="30"/>
    </location>
</feature>
<feature type="strand" evidence="16">
    <location>
        <begin position="32"/>
        <end position="37"/>
    </location>
</feature>
<feature type="strand" evidence="16">
    <location>
        <begin position="42"/>
        <end position="44"/>
    </location>
</feature>
<feature type="strand" evidence="16">
    <location>
        <begin position="46"/>
        <end position="49"/>
    </location>
</feature>
<feature type="turn" evidence="16">
    <location>
        <begin position="54"/>
        <end position="58"/>
    </location>
</feature>
<feature type="strand" evidence="16">
    <location>
        <begin position="62"/>
        <end position="67"/>
    </location>
</feature>
<feature type="strand" evidence="18">
    <location>
        <begin position="69"/>
        <end position="71"/>
    </location>
</feature>
<feature type="helix" evidence="17">
    <location>
        <begin position="72"/>
        <end position="74"/>
    </location>
</feature>
<feature type="strand" evidence="16">
    <location>
        <begin position="78"/>
        <end position="81"/>
    </location>
</feature>
<feature type="helix" evidence="18">
    <location>
        <begin position="85"/>
        <end position="88"/>
    </location>
</feature>
<feature type="helix" evidence="16">
    <location>
        <begin position="89"/>
        <end position="91"/>
    </location>
</feature>
<feature type="turn" evidence="16">
    <location>
        <begin position="92"/>
        <end position="94"/>
    </location>
</feature>
<feature type="strand" evidence="16">
    <location>
        <begin position="95"/>
        <end position="97"/>
    </location>
</feature>
<feature type="helix" evidence="16">
    <location>
        <begin position="101"/>
        <end position="103"/>
    </location>
</feature>
<feature type="strand" evidence="16">
    <location>
        <begin position="108"/>
        <end position="110"/>
    </location>
</feature>
<feature type="helix" evidence="16">
    <location>
        <begin position="115"/>
        <end position="117"/>
    </location>
</feature>
<feature type="strand" evidence="16">
    <location>
        <begin position="119"/>
        <end position="127"/>
    </location>
</feature>
<feature type="strand" evidence="16">
    <location>
        <begin position="130"/>
        <end position="133"/>
    </location>
</feature>
<feature type="strand" evidence="16">
    <location>
        <begin position="139"/>
        <end position="144"/>
    </location>
</feature>
<accession>Q9Y286</accession>
<accession>Q9NZQ1</accession>
<accession>Q9UJ86</accession>
<accession>Q9UJ87</accession>
<accession>Q9Y502</accession>
<organism>
    <name type="scientific">Homo sapiens</name>
    <name type="common">Human</name>
    <dbReference type="NCBI Taxonomy" id="9606"/>
    <lineage>
        <taxon>Eukaryota</taxon>
        <taxon>Metazoa</taxon>
        <taxon>Chordata</taxon>
        <taxon>Craniata</taxon>
        <taxon>Vertebrata</taxon>
        <taxon>Euteleostomi</taxon>
        <taxon>Mammalia</taxon>
        <taxon>Eutheria</taxon>
        <taxon>Euarchontoglires</taxon>
        <taxon>Primates</taxon>
        <taxon>Haplorrhini</taxon>
        <taxon>Catarrhini</taxon>
        <taxon>Hominidae</taxon>
        <taxon>Homo</taxon>
    </lineage>
</organism>
<dbReference type="EMBL" id="AF170485">
    <property type="protein sequence ID" value="AAF12759.1"/>
    <property type="molecule type" value="mRNA"/>
</dbReference>
<dbReference type="EMBL" id="AJ007395">
    <property type="protein sequence ID" value="CAB46011.1"/>
    <property type="molecule type" value="mRNA"/>
</dbReference>
<dbReference type="EMBL" id="AJ130710">
    <property type="protein sequence ID" value="CAB51126.1"/>
    <property type="molecule type" value="mRNA"/>
</dbReference>
<dbReference type="EMBL" id="AJ130711">
    <property type="protein sequence ID" value="CAB51127.1"/>
    <property type="molecule type" value="mRNA"/>
</dbReference>
<dbReference type="EMBL" id="AJ130712">
    <property type="protein sequence ID" value="CAB51128.1"/>
    <property type="molecule type" value="mRNA"/>
</dbReference>
<dbReference type="EMBL" id="AJ130713">
    <property type="protein sequence ID" value="CAB51129.1"/>
    <property type="molecule type" value="mRNA"/>
</dbReference>
<dbReference type="EMBL" id="AF178981">
    <property type="protein sequence ID" value="AAF44346.1"/>
    <property type="status" value="ALT_FRAME"/>
    <property type="molecule type" value="mRNA"/>
</dbReference>
<dbReference type="EMBL" id="AF193441">
    <property type="protein sequence ID" value="AAF06790.1"/>
    <property type="molecule type" value="mRNA"/>
</dbReference>
<dbReference type="CCDS" id="CCDS12826.1">
    <molecule id="Q9Y286-1"/>
</dbReference>
<dbReference type="CCDS" id="CCDS42601.1">
    <molecule id="Q9Y286-2"/>
</dbReference>
<dbReference type="CCDS" id="CCDS62771.1">
    <molecule id="Q9Y286-4"/>
</dbReference>
<dbReference type="RefSeq" id="NP_001264130.1">
    <molecule id="Q9Y286-4"/>
    <property type="nucleotide sequence ID" value="NM_001277201.2"/>
</dbReference>
<dbReference type="RefSeq" id="NP_055200.1">
    <molecule id="Q9Y286-1"/>
    <property type="nucleotide sequence ID" value="NM_014385.4"/>
</dbReference>
<dbReference type="RefSeq" id="NP_057627.2">
    <molecule id="Q9Y286-2"/>
    <property type="nucleotide sequence ID" value="NM_016543.4"/>
</dbReference>
<dbReference type="PDB" id="1NKO">
    <property type="method" value="X-ray"/>
    <property type="resolution" value="1.45 A"/>
    <property type="chains" value="A=19-150"/>
</dbReference>
<dbReference type="PDB" id="1O7S">
    <property type="method" value="X-ray"/>
    <property type="resolution" value="1.75 A"/>
    <property type="chains" value="A=18-144"/>
</dbReference>
<dbReference type="PDB" id="1O7V">
    <property type="method" value="X-ray"/>
    <property type="resolution" value="1.90 A"/>
    <property type="chains" value="A=18-144"/>
</dbReference>
<dbReference type="PDB" id="2DF3">
    <property type="method" value="X-ray"/>
    <property type="resolution" value="1.90 A"/>
    <property type="chains" value="A=18-144"/>
</dbReference>
<dbReference type="PDB" id="2G5R">
    <property type="method" value="X-ray"/>
    <property type="resolution" value="1.60 A"/>
    <property type="chains" value="A=18-144"/>
</dbReference>
<dbReference type="PDB" id="2HRL">
    <property type="method" value="X-ray"/>
    <property type="resolution" value="1.85 A"/>
    <property type="chains" value="A=18-144"/>
</dbReference>
<dbReference type="PDBsum" id="1NKO"/>
<dbReference type="PDBsum" id="1O7S"/>
<dbReference type="PDBsum" id="1O7V"/>
<dbReference type="PDBsum" id="2DF3"/>
<dbReference type="PDBsum" id="2G5R"/>
<dbReference type="PDBsum" id="2HRL"/>
<dbReference type="SMR" id="Q9Y286"/>
<dbReference type="BioGRID" id="117967">
    <property type="interactions" value="16"/>
</dbReference>
<dbReference type="FunCoup" id="Q9Y286">
    <property type="interactions" value="484"/>
</dbReference>
<dbReference type="IntAct" id="Q9Y286">
    <property type="interactions" value="9"/>
</dbReference>
<dbReference type="STRING" id="9606.ENSP00000323328"/>
<dbReference type="BindingDB" id="Q9Y286"/>
<dbReference type="ChEMBL" id="CHEMBL3603730"/>
<dbReference type="DrugBank" id="DB03740">
    <property type="generic name" value="N-acetyl-alpha-D-glucosamine"/>
</dbReference>
<dbReference type="UniLectin" id="Q9Y286"/>
<dbReference type="GlyConnect" id="569">
    <property type="glycosylation" value="16 N-Linked glycans"/>
</dbReference>
<dbReference type="GlyCosmos" id="Q9Y286">
    <property type="glycosylation" value="8 sites, 31 glycans"/>
</dbReference>
<dbReference type="GlyGen" id="Q9Y286">
    <property type="glycosylation" value="9 sites, 31 N-linked glycans (1 site), 1 O-linked glycan (1 site)"/>
</dbReference>
<dbReference type="iPTMnet" id="Q9Y286"/>
<dbReference type="PhosphoSitePlus" id="Q9Y286"/>
<dbReference type="BioMuta" id="SIGLEC7"/>
<dbReference type="DMDM" id="25009269"/>
<dbReference type="MassIVE" id="Q9Y286"/>
<dbReference type="PaxDb" id="9606-ENSP00000323328"/>
<dbReference type="PeptideAtlas" id="Q9Y286"/>
<dbReference type="ProteomicsDB" id="85695">
    <molecule id="Q9Y286-1"/>
</dbReference>
<dbReference type="ProteomicsDB" id="85696">
    <molecule id="Q9Y286-2"/>
</dbReference>
<dbReference type="ProteomicsDB" id="85697">
    <molecule id="Q9Y286-3"/>
</dbReference>
<dbReference type="ProteomicsDB" id="85698">
    <molecule id="Q9Y286-4"/>
</dbReference>
<dbReference type="Antibodypedia" id="18998">
    <property type="antibodies" value="932 antibodies from 37 providers"/>
</dbReference>
<dbReference type="CPTC" id="Q9Y286">
    <property type="antibodies" value="1 antibody"/>
</dbReference>
<dbReference type="DNASU" id="27036"/>
<dbReference type="Ensembl" id="ENST00000305628.7">
    <molecule id="Q9Y286-2"/>
    <property type="protein sequence ID" value="ENSP00000306757.6"/>
    <property type="gene ID" value="ENSG00000168995.13"/>
</dbReference>
<dbReference type="Ensembl" id="ENST00000317643.10">
    <molecule id="Q9Y286-1"/>
    <property type="protein sequence ID" value="ENSP00000323328.6"/>
    <property type="gene ID" value="ENSG00000168995.13"/>
</dbReference>
<dbReference type="Ensembl" id="ENST00000536156.5">
    <molecule id="Q9Y286-3"/>
    <property type="protein sequence ID" value="ENSP00000437609.1"/>
    <property type="gene ID" value="ENSG00000168995.13"/>
</dbReference>
<dbReference type="Ensembl" id="ENST00000600577.1">
    <molecule id="Q9Y286-4"/>
    <property type="protein sequence ID" value="ENSP00000472529.1"/>
    <property type="gene ID" value="ENSG00000168995.13"/>
</dbReference>
<dbReference type="GeneID" id="27036"/>
<dbReference type="KEGG" id="hsa:27036"/>
<dbReference type="MANE-Select" id="ENST00000317643.10">
    <property type="protein sequence ID" value="ENSP00000323328.6"/>
    <property type="RefSeq nucleotide sequence ID" value="NM_014385.4"/>
    <property type="RefSeq protein sequence ID" value="NP_055200.1"/>
</dbReference>
<dbReference type="UCSC" id="uc002pvv.1">
    <molecule id="Q9Y286-1"/>
    <property type="organism name" value="human"/>
</dbReference>
<dbReference type="AGR" id="HGNC:10876"/>
<dbReference type="CTD" id="27036"/>
<dbReference type="DisGeNET" id="27036"/>
<dbReference type="GeneCards" id="SIGLEC7"/>
<dbReference type="HGNC" id="HGNC:10876">
    <property type="gene designation" value="SIGLEC7"/>
</dbReference>
<dbReference type="HPA" id="ENSG00000168995">
    <property type="expression patterns" value="Tissue enhanced (lymphoid)"/>
</dbReference>
<dbReference type="MIM" id="604410">
    <property type="type" value="gene"/>
</dbReference>
<dbReference type="neXtProt" id="NX_Q9Y286"/>
<dbReference type="OpenTargets" id="ENSG00000168995"/>
<dbReference type="PharmGKB" id="PA35777"/>
<dbReference type="VEuPathDB" id="HostDB:ENSG00000168995"/>
<dbReference type="eggNOG" id="ENOG502S41V">
    <property type="taxonomic scope" value="Eukaryota"/>
</dbReference>
<dbReference type="GeneTree" id="ENSGT01080000257333"/>
<dbReference type="HOGENOM" id="CLU_024444_6_1_1"/>
<dbReference type="InParanoid" id="Q9Y286"/>
<dbReference type="OMA" id="CFQNLTC"/>
<dbReference type="OrthoDB" id="10012075at2759"/>
<dbReference type="PAN-GO" id="Q9Y286">
    <property type="GO annotations" value="3 GO annotations based on evolutionary models"/>
</dbReference>
<dbReference type="PhylomeDB" id="Q9Y286"/>
<dbReference type="TreeFam" id="TF332441"/>
<dbReference type="PathwayCommons" id="Q9Y286"/>
<dbReference type="Reactome" id="R-HSA-198933">
    <property type="pathway name" value="Immunoregulatory interactions between a Lymphoid and a non-Lymphoid cell"/>
</dbReference>
<dbReference type="SignaLink" id="Q9Y286"/>
<dbReference type="SIGNOR" id="Q9Y286"/>
<dbReference type="BioGRID-ORCS" id="27036">
    <property type="hits" value="12 hits in 1151 CRISPR screens"/>
</dbReference>
<dbReference type="ChiTaRS" id="SIGLEC7">
    <property type="organism name" value="human"/>
</dbReference>
<dbReference type="EvolutionaryTrace" id="Q9Y286"/>
<dbReference type="GeneWiki" id="SIGLEC7"/>
<dbReference type="GenomeRNAi" id="27036"/>
<dbReference type="Pharos" id="Q9Y286">
    <property type="development level" value="Tchem"/>
</dbReference>
<dbReference type="PRO" id="PR:Q9Y286"/>
<dbReference type="Proteomes" id="UP000005640">
    <property type="component" value="Chromosome 19"/>
</dbReference>
<dbReference type="RNAct" id="Q9Y286">
    <property type="molecule type" value="protein"/>
</dbReference>
<dbReference type="Bgee" id="ENSG00000168995">
    <property type="expression patterns" value="Expressed in granulocyte and 130 other cell types or tissues"/>
</dbReference>
<dbReference type="ExpressionAtlas" id="Q9Y286">
    <property type="expression patterns" value="baseline and differential"/>
</dbReference>
<dbReference type="GO" id="GO:0005886">
    <property type="term" value="C:plasma membrane"/>
    <property type="evidence" value="ECO:0000318"/>
    <property type="project" value="GO_Central"/>
</dbReference>
<dbReference type="GO" id="GO:0030246">
    <property type="term" value="F:carbohydrate binding"/>
    <property type="evidence" value="ECO:0000304"/>
    <property type="project" value="ProtInc"/>
</dbReference>
<dbReference type="GO" id="GO:0033691">
    <property type="term" value="F:sialic acid binding"/>
    <property type="evidence" value="ECO:0000318"/>
    <property type="project" value="GO_Central"/>
</dbReference>
<dbReference type="GO" id="GO:0038023">
    <property type="term" value="F:signaling receptor activity"/>
    <property type="evidence" value="ECO:0000304"/>
    <property type="project" value="ProtInc"/>
</dbReference>
<dbReference type="GO" id="GO:0007155">
    <property type="term" value="P:cell adhesion"/>
    <property type="evidence" value="ECO:0000318"/>
    <property type="project" value="GO_Central"/>
</dbReference>
<dbReference type="CDD" id="cd05712">
    <property type="entry name" value="IgV_CD33"/>
    <property type="match status" value="1"/>
</dbReference>
<dbReference type="FunFam" id="2.60.40.10:FF:000912">
    <property type="entry name" value="Myeloid cell surface antigen CD33"/>
    <property type="match status" value="1"/>
</dbReference>
<dbReference type="FunFam" id="2.60.40.10:FF:001240">
    <property type="entry name" value="Sialic acid binding Ig-like lectin E"/>
    <property type="match status" value="1"/>
</dbReference>
<dbReference type="FunFam" id="2.60.40.10:FF:000829">
    <property type="entry name" value="Sialic acid-binding Ig-like lectin 8"/>
    <property type="match status" value="1"/>
</dbReference>
<dbReference type="Gene3D" id="2.60.40.10">
    <property type="entry name" value="Immunoglobulins"/>
    <property type="match status" value="3"/>
</dbReference>
<dbReference type="InterPro" id="IPR007110">
    <property type="entry name" value="Ig-like_dom"/>
</dbReference>
<dbReference type="InterPro" id="IPR036179">
    <property type="entry name" value="Ig-like_dom_sf"/>
</dbReference>
<dbReference type="InterPro" id="IPR013783">
    <property type="entry name" value="Ig-like_fold"/>
</dbReference>
<dbReference type="InterPro" id="IPR003599">
    <property type="entry name" value="Ig_sub"/>
</dbReference>
<dbReference type="InterPro" id="IPR003598">
    <property type="entry name" value="Ig_sub2"/>
</dbReference>
<dbReference type="InterPro" id="IPR013106">
    <property type="entry name" value="Ig_V-set"/>
</dbReference>
<dbReference type="InterPro" id="IPR051036">
    <property type="entry name" value="SIGLEC"/>
</dbReference>
<dbReference type="PANTHER" id="PTHR12035">
    <property type="entry name" value="SIALIC ACID BINDING IMMUNOGLOBULIN-LIKE LECTIN"/>
    <property type="match status" value="1"/>
</dbReference>
<dbReference type="PANTHER" id="PTHR12035:SF111">
    <property type="entry name" value="SIALIC ACID-BINDING IG-LIKE LECTIN 7"/>
    <property type="match status" value="1"/>
</dbReference>
<dbReference type="Pfam" id="PF13895">
    <property type="entry name" value="Ig_2"/>
    <property type="match status" value="1"/>
</dbReference>
<dbReference type="Pfam" id="PF07686">
    <property type="entry name" value="V-set"/>
    <property type="match status" value="1"/>
</dbReference>
<dbReference type="SMART" id="SM00409">
    <property type="entry name" value="IG"/>
    <property type="match status" value="3"/>
</dbReference>
<dbReference type="SMART" id="SM00408">
    <property type="entry name" value="IGc2"/>
    <property type="match status" value="1"/>
</dbReference>
<dbReference type="SUPFAM" id="SSF48726">
    <property type="entry name" value="Immunoglobulin"/>
    <property type="match status" value="3"/>
</dbReference>
<dbReference type="PROSITE" id="PS50835">
    <property type="entry name" value="IG_LIKE"/>
    <property type="match status" value="2"/>
</dbReference>
<gene>
    <name type="primary">SIGLEC7</name>
    <name type="synonym">AIRM1</name>
</gene>
<protein>
    <recommendedName>
        <fullName>Sialic acid-binding Ig-like lectin 7</fullName>
        <shortName>Siglec-7</shortName>
    </recommendedName>
    <alternativeName>
        <fullName>Adhesion inhibitory receptor molecule 1</fullName>
        <shortName>AIRM-1</shortName>
    </alternativeName>
    <alternativeName>
        <fullName>CDw328</fullName>
    </alternativeName>
    <alternativeName>
        <fullName>D-siglec</fullName>
    </alternativeName>
    <alternativeName>
        <fullName>QA79 membrane protein</fullName>
    </alternativeName>
    <alternativeName>
        <fullName>p75</fullName>
    </alternativeName>
    <cdAntigenName>CD328</cdAntigenName>
</protein>